<feature type="signal peptide" evidence="3">
    <location>
        <begin position="1"/>
        <end position="22"/>
    </location>
</feature>
<feature type="propeptide" id="PRO_0000003463" evidence="3">
    <location>
        <begin position="23"/>
        <end position="43"/>
    </location>
</feature>
<feature type="peptide" id="PRO_0000003464" description="Ranacyclin-T">
    <location>
        <begin position="44"/>
        <end position="60"/>
    </location>
</feature>
<feature type="modified residue" description="Lysine amide" evidence="4">
    <location>
        <position position="60"/>
    </location>
</feature>
<feature type="disulfide bond" evidence="1">
    <location>
        <begin position="49"/>
        <end position="59"/>
    </location>
</feature>
<organism evidence="7">
    <name type="scientific">Rana temporaria</name>
    <name type="common">European common frog</name>
    <dbReference type="NCBI Taxonomy" id="8407"/>
    <lineage>
        <taxon>Eukaryota</taxon>
        <taxon>Metazoa</taxon>
        <taxon>Chordata</taxon>
        <taxon>Craniata</taxon>
        <taxon>Vertebrata</taxon>
        <taxon>Euteleostomi</taxon>
        <taxon>Amphibia</taxon>
        <taxon>Batrachia</taxon>
        <taxon>Anura</taxon>
        <taxon>Neobatrachia</taxon>
        <taxon>Ranoidea</taxon>
        <taxon>Ranidae</taxon>
        <taxon>Rana</taxon>
        <taxon>Rana</taxon>
    </lineage>
</organism>
<sequence length="62" mass="6983">MFTMKKTLLVLFFLGVVSLSLCVEERDADEEDGGEVMEEEVKRGALRGCWTKSYPPKPCKGK</sequence>
<reference evidence="6" key="1">
    <citation type="journal article" date="2003" name="Biochemistry">
        <title>Ranacyclins, a new family of short cyclic antimicrobial peptides: biological function, mode of action and parameters involved in target specificity.</title>
        <authorList>
            <person name="Mangoni M.L."/>
            <person name="Papo N."/>
            <person name="Mignogna G."/>
            <person name="Andreu D."/>
            <person name="Shai Y."/>
            <person name="Barra D."/>
            <person name="Simmaco M."/>
        </authorList>
    </citation>
    <scope>NUCLEOTIDE SEQUENCE [MRNA]</scope>
    <scope>AMIDATION AT LYS-60</scope>
    <scope>SYNTHESIS</scope>
    <scope>FUNCTION</scope>
    <scope>TISSUE SPECIFICITY</scope>
    <source>
        <tissue evidence="7">Skin</tissue>
    </source>
</reference>
<name>RACYT_RANTE</name>
<evidence type="ECO:0000250" key="1"/>
<evidence type="ECO:0000250" key="2">
    <source>
        <dbReference type="UniProtKB" id="P83663"/>
    </source>
</evidence>
<evidence type="ECO:0000255" key="3"/>
<evidence type="ECO:0000269" key="4">
    <source>
    </source>
</evidence>
<evidence type="ECO:0000303" key="5">
    <source>
    </source>
</evidence>
<evidence type="ECO:0000305" key="6"/>
<evidence type="ECO:0000312" key="7">
    <source>
        <dbReference type="EMBL" id="CAE48162.1"/>
    </source>
</evidence>
<dbReference type="EMBL" id="AJ583866">
    <property type="protein sequence ID" value="CAE48162.1"/>
    <property type="molecule type" value="mRNA"/>
</dbReference>
<dbReference type="GO" id="GO:0005576">
    <property type="term" value="C:extracellular region"/>
    <property type="evidence" value="ECO:0000250"/>
    <property type="project" value="UniProtKB"/>
</dbReference>
<dbReference type="GO" id="GO:0006952">
    <property type="term" value="P:defense response"/>
    <property type="evidence" value="ECO:0000314"/>
    <property type="project" value="UniProtKB"/>
</dbReference>
<dbReference type="GO" id="GO:0050832">
    <property type="term" value="P:defense response to fungus"/>
    <property type="evidence" value="ECO:0000314"/>
    <property type="project" value="UniProtKB"/>
</dbReference>
<dbReference type="GO" id="GO:0050829">
    <property type="term" value="P:defense response to Gram-negative bacterium"/>
    <property type="evidence" value="ECO:0000314"/>
    <property type="project" value="UniProtKB"/>
</dbReference>
<dbReference type="GO" id="GO:0050830">
    <property type="term" value="P:defense response to Gram-positive bacterium"/>
    <property type="evidence" value="ECO:0000314"/>
    <property type="project" value="UniProtKB"/>
</dbReference>
<dbReference type="GO" id="GO:0031640">
    <property type="term" value="P:killing of cells of another organism"/>
    <property type="evidence" value="ECO:0007669"/>
    <property type="project" value="UniProtKB-KW"/>
</dbReference>
<dbReference type="InterPro" id="IPR004275">
    <property type="entry name" value="Frog_antimicrobial_propeptide"/>
</dbReference>
<dbReference type="InterPro" id="IPR032019">
    <property type="entry name" value="Frog_antimicrobial_Ranidae"/>
</dbReference>
<dbReference type="Pfam" id="PF16048">
    <property type="entry name" value="Antimicrobial23"/>
    <property type="match status" value="1"/>
</dbReference>
<dbReference type="Pfam" id="PF03032">
    <property type="entry name" value="FSAP_sig_propep"/>
    <property type="match status" value="1"/>
</dbReference>
<protein>
    <recommendedName>
        <fullName>Ranacyclin-T</fullName>
    </recommendedName>
</protein>
<gene>
    <name type="primary">RNCT</name>
</gene>
<proteinExistence type="evidence at protein level"/>
<accession>P83719</accession>
<keyword id="KW-0027">Amidation</keyword>
<keyword id="KW-0878">Amphibian defense peptide</keyword>
<keyword id="KW-0044">Antibiotic</keyword>
<keyword id="KW-0929">Antimicrobial</keyword>
<keyword id="KW-0165">Cleavage on pair of basic residues</keyword>
<keyword id="KW-0204">Cytolysis</keyword>
<keyword id="KW-1015">Disulfide bond</keyword>
<keyword id="KW-0295">Fungicide</keyword>
<keyword id="KW-0354">Hemolysis</keyword>
<keyword id="KW-0964">Secreted</keyword>
<keyword id="KW-0732">Signal</keyword>
<comment type="function">
    <text evidence="4 5">Has antibacterial activity against Gram-positive bacteria B.megaterium Bm11, S.lentus and M.luteus, and Gram-negative bacteria E.coli D22, Y.pseudotuberculosis YP III and P.syringae pv tabaci, and antifungal activity against C.albicans ATCC 10231, C.tropicalis, C.guiller-mondii and P.nicotianae spores. Has weak hemolytic activity. The mature peptide inserts into the hydrophobic core of the bacterial cell membrane and increases permeability without disrupting membrane integrity. Probably binds to the outer membrane surface before aggregating to form transmembrane pores.</text>
</comment>
<comment type="subcellular location">
    <subcellularLocation>
        <location evidence="2">Secreted</location>
    </subcellularLocation>
</comment>
<comment type="tissue specificity">
    <text evidence="4">Expressed by the skin granular glands.</text>
</comment>
<comment type="similarity">
    <text evidence="6">Belongs to the frog skin active peptide (FSAP) family. Brevinin subfamily.</text>
</comment>